<proteinExistence type="evidence at protein level"/>
<comment type="function">
    <text evidence="6">Transcription regulator. Forms a sequence-specific DNA-binding protein complex with MYC or MAD which recognizes the core sequence 5'-CAC[GA]TG-3'. The MYC-MAX complex is a transcriptional activator, whereas the MAD-MAX complex is a repressor.</text>
</comment>
<comment type="subunit">
    <text evidence="6">Efficient DNA binding requires dimerization with another bHLH protein. Binds DNA as a heterodimer with MYC or MAD.</text>
</comment>
<comment type="interaction">
    <interactant intactId="EBI-193577">
        <id>P91664</id>
    </interactant>
    <interactant intactId="EBI-120162">
        <id>Q9W4S7</id>
        <label>Myc</label>
    </interactant>
    <organismsDiffer>false</organismsDiffer>
    <experiments>3</experiments>
</comment>
<comment type="subcellular location">
    <subcellularLocation>
        <location>Nucleus</location>
    </subcellularLocation>
</comment>
<comment type="tissue specificity">
    <text evidence="6">Embryo, especially in central nervous system.</text>
</comment>
<comment type="developmental stage">
    <text evidence="6">Highest expression in embryos.</text>
</comment>
<comment type="similarity">
    <text evidence="7">Belongs to the MAX family.</text>
</comment>
<comment type="sequence caution" evidence="7">
    <conflict type="miscellaneous discrepancy">
        <sequence resource="EMBL-CDS" id="AAL28562"/>
    </conflict>
    <text>Intron retention.</text>
</comment>
<sequence length="161" mass="18530">MSMSDDDRDIDIESDEDGDSDTGLGSSRHTNTANFTQAEKRAHHNALERRRRDHIKESFTNLREAVPTLKGEKASRAQILKKTTECIQTMRRKISENQKDIEEIKRQNNIIAKQIQALESSNGDQFSEFLSDEEVGSEEADDEDLDQDFSRRNKKMKTFHA</sequence>
<protein>
    <recommendedName>
        <fullName>Protein max</fullName>
        <shortName>dMax</shortName>
    </recommendedName>
    <alternativeName>
        <fullName>Myc-associated factor X</fullName>
    </alternativeName>
</protein>
<organism evidence="8">
    <name type="scientific">Drosophila melanogaster</name>
    <name type="common">Fruit fly</name>
    <dbReference type="NCBI Taxonomy" id="7227"/>
    <lineage>
        <taxon>Eukaryota</taxon>
        <taxon>Metazoa</taxon>
        <taxon>Ecdysozoa</taxon>
        <taxon>Arthropoda</taxon>
        <taxon>Hexapoda</taxon>
        <taxon>Insecta</taxon>
        <taxon>Pterygota</taxon>
        <taxon>Neoptera</taxon>
        <taxon>Endopterygota</taxon>
        <taxon>Diptera</taxon>
        <taxon>Brachycera</taxon>
        <taxon>Muscomorpha</taxon>
        <taxon>Ephydroidea</taxon>
        <taxon>Drosophilidae</taxon>
        <taxon>Drosophila</taxon>
        <taxon>Sophophora</taxon>
    </lineage>
</organism>
<feature type="chain" id="PRO_0000127275" description="Protein max">
    <location>
        <begin position="1"/>
        <end position="161"/>
    </location>
</feature>
<feature type="domain" description="bHLH" evidence="1">
    <location>
        <begin position="39"/>
        <end position="90"/>
    </location>
</feature>
<feature type="region of interest" description="Disordered" evidence="2">
    <location>
        <begin position="1"/>
        <end position="59"/>
    </location>
</feature>
<feature type="region of interest" description="Disordered" evidence="2">
    <location>
        <begin position="122"/>
        <end position="161"/>
    </location>
</feature>
<feature type="compositionally biased region" description="Acidic residues" evidence="2">
    <location>
        <begin position="1"/>
        <end position="20"/>
    </location>
</feature>
<feature type="compositionally biased region" description="Basic and acidic residues" evidence="2">
    <location>
        <begin position="45"/>
        <end position="57"/>
    </location>
</feature>
<feature type="compositionally biased region" description="Acidic residues" evidence="2">
    <location>
        <begin position="130"/>
        <end position="147"/>
    </location>
</feature>
<feature type="compositionally biased region" description="Basic residues" evidence="2">
    <location>
        <begin position="152"/>
        <end position="161"/>
    </location>
</feature>
<feature type="modified residue" description="Phosphoserine" evidence="5">
    <location>
        <position position="131"/>
    </location>
</feature>
<feature type="modified residue" description="Phosphoserine" evidence="5">
    <location>
        <position position="137"/>
    </location>
</feature>
<feature type="sequence conflict" description="In Ref. 4; AAL90428." evidence="7" ref="4">
    <original>R</original>
    <variation>G</variation>
    <location>
        <position position="91"/>
    </location>
</feature>
<dbReference type="EMBL" id="U77369">
    <property type="protein sequence ID" value="AAB39841.1"/>
    <property type="molecule type" value="mRNA"/>
</dbReference>
<dbReference type="EMBL" id="AE014296">
    <property type="protein sequence ID" value="AAF49179.1"/>
    <property type="molecule type" value="Genomic_DNA"/>
</dbReference>
<dbReference type="EMBL" id="AY061014">
    <property type="protein sequence ID" value="AAL28562.1"/>
    <property type="status" value="ALT_SEQ"/>
    <property type="molecule type" value="mRNA"/>
</dbReference>
<dbReference type="EMBL" id="AY089690">
    <property type="protein sequence ID" value="AAL90428.1"/>
    <property type="molecule type" value="mRNA"/>
</dbReference>
<dbReference type="EMBL" id="BT025211">
    <property type="protein sequence ID" value="ABF17902.1"/>
    <property type="molecule type" value="mRNA"/>
</dbReference>
<dbReference type="RefSeq" id="NP_001246833.1">
    <property type="nucleotide sequence ID" value="NM_001259904.2"/>
</dbReference>
<dbReference type="RefSeq" id="NP_001287114.1">
    <property type="nucleotide sequence ID" value="NM_001300185.1"/>
</dbReference>
<dbReference type="RefSeq" id="NP_649097.1">
    <property type="nucleotide sequence ID" value="NM_140840.4"/>
</dbReference>
<dbReference type="SMR" id="P91664"/>
<dbReference type="BioGRID" id="65371">
    <property type="interactions" value="8"/>
</dbReference>
<dbReference type="DIP" id="DIP-60982N"/>
<dbReference type="FunCoup" id="P91664">
    <property type="interactions" value="1860"/>
</dbReference>
<dbReference type="IntAct" id="P91664">
    <property type="interactions" value="8"/>
</dbReference>
<dbReference type="STRING" id="7227.FBpp0311541"/>
<dbReference type="iPTMnet" id="P91664"/>
<dbReference type="PaxDb" id="7227-FBpp0074785"/>
<dbReference type="DNASU" id="40095"/>
<dbReference type="EnsemblMetazoa" id="FBtr0075018">
    <property type="protein sequence ID" value="FBpp0074785"/>
    <property type="gene ID" value="FBgn0017578"/>
</dbReference>
<dbReference type="EnsemblMetazoa" id="FBtr0310276">
    <property type="protein sequence ID" value="FBpp0301959"/>
    <property type="gene ID" value="FBgn0017578"/>
</dbReference>
<dbReference type="EnsemblMetazoa" id="FBtr0345391">
    <property type="protein sequence ID" value="FBpp0311541"/>
    <property type="gene ID" value="FBgn0017578"/>
</dbReference>
<dbReference type="GeneID" id="40095"/>
<dbReference type="KEGG" id="dme:Dmel_CG9648"/>
<dbReference type="UCSC" id="CG9648-RA">
    <property type="organism name" value="d. melanogaster"/>
</dbReference>
<dbReference type="AGR" id="FB:FBgn0017578"/>
<dbReference type="CTD" id="4149"/>
<dbReference type="FlyBase" id="FBgn0017578">
    <property type="gene designation" value="Max"/>
</dbReference>
<dbReference type="VEuPathDB" id="VectorBase:FBgn0017578"/>
<dbReference type="eggNOG" id="KOG2483">
    <property type="taxonomic scope" value="Eukaryota"/>
</dbReference>
<dbReference type="GeneTree" id="ENSGT00530000064011"/>
<dbReference type="HOGENOM" id="CLU_109424_0_0_1"/>
<dbReference type="InParanoid" id="P91664"/>
<dbReference type="OMA" id="YMDAHEL"/>
<dbReference type="OrthoDB" id="8964853at2759"/>
<dbReference type="PhylomeDB" id="P91664"/>
<dbReference type="Reactome" id="R-DME-8953750">
    <property type="pathway name" value="Transcriptional Regulation by E2F6"/>
</dbReference>
<dbReference type="SignaLink" id="P91664"/>
<dbReference type="BioGRID-ORCS" id="40095">
    <property type="hits" value="0 hits in 1 CRISPR screen"/>
</dbReference>
<dbReference type="GenomeRNAi" id="40095"/>
<dbReference type="PRO" id="PR:P91664"/>
<dbReference type="Proteomes" id="UP000000803">
    <property type="component" value="Chromosome 3L"/>
</dbReference>
<dbReference type="Bgee" id="FBgn0017578">
    <property type="expression patterns" value="Expressed in adult enteroendocrine precursor cell in adult midgut (Drosophila) and 173 other cell types or tissues"/>
</dbReference>
<dbReference type="ExpressionAtlas" id="P91664">
    <property type="expression patterns" value="baseline and differential"/>
</dbReference>
<dbReference type="GO" id="GO:0005634">
    <property type="term" value="C:nucleus"/>
    <property type="evidence" value="ECO:0000305"/>
    <property type="project" value="UniProtKB"/>
</dbReference>
<dbReference type="GO" id="GO:0090575">
    <property type="term" value="C:RNA polymerase II transcription regulator complex"/>
    <property type="evidence" value="ECO:0000318"/>
    <property type="project" value="GO_Central"/>
</dbReference>
<dbReference type="GO" id="GO:0003677">
    <property type="term" value="F:DNA binding"/>
    <property type="evidence" value="ECO:0007669"/>
    <property type="project" value="UniProtKB-KW"/>
</dbReference>
<dbReference type="GO" id="GO:0003700">
    <property type="term" value="F:DNA-binding transcription factor activity"/>
    <property type="evidence" value="ECO:0000314"/>
    <property type="project" value="UniProtKB"/>
</dbReference>
<dbReference type="GO" id="GO:0046982">
    <property type="term" value="F:protein heterodimerization activity"/>
    <property type="evidence" value="ECO:0000353"/>
    <property type="project" value="FlyBase"/>
</dbReference>
<dbReference type="GO" id="GO:0000122">
    <property type="term" value="P:negative regulation of transcription by RNA polymerase II"/>
    <property type="evidence" value="ECO:0000314"/>
    <property type="project" value="FlyBase"/>
</dbReference>
<dbReference type="GO" id="GO:0045944">
    <property type="term" value="P:positive regulation of transcription by RNA polymerase II"/>
    <property type="evidence" value="ECO:0000318"/>
    <property type="project" value="GO_Central"/>
</dbReference>
<dbReference type="GO" id="GO:0006355">
    <property type="term" value="P:regulation of DNA-templated transcription"/>
    <property type="evidence" value="ECO:0000314"/>
    <property type="project" value="UniProtKB"/>
</dbReference>
<dbReference type="CDD" id="cd11406">
    <property type="entry name" value="bHLHzip_Max"/>
    <property type="match status" value="1"/>
</dbReference>
<dbReference type="FunFam" id="4.10.280.10:FF:000023">
    <property type="entry name" value="MAX isoform 13"/>
    <property type="match status" value="1"/>
</dbReference>
<dbReference type="Gene3D" id="4.10.280.10">
    <property type="entry name" value="Helix-loop-helix DNA-binding domain"/>
    <property type="match status" value="1"/>
</dbReference>
<dbReference type="InterPro" id="IPR011598">
    <property type="entry name" value="bHLH_dom"/>
</dbReference>
<dbReference type="InterPro" id="IPR036638">
    <property type="entry name" value="HLH_DNA-bd_sf"/>
</dbReference>
<dbReference type="PANTHER" id="PTHR10328:SF3">
    <property type="entry name" value="PROTEIN MAX"/>
    <property type="match status" value="1"/>
</dbReference>
<dbReference type="PANTHER" id="PTHR10328">
    <property type="entry name" value="PROTEIN MAX MYC-ASSOCIATED FACTOR X"/>
    <property type="match status" value="1"/>
</dbReference>
<dbReference type="Pfam" id="PF00010">
    <property type="entry name" value="HLH"/>
    <property type="match status" value="1"/>
</dbReference>
<dbReference type="SMART" id="SM00353">
    <property type="entry name" value="HLH"/>
    <property type="match status" value="1"/>
</dbReference>
<dbReference type="SUPFAM" id="SSF47459">
    <property type="entry name" value="HLH, helix-loop-helix DNA-binding domain"/>
    <property type="match status" value="1"/>
</dbReference>
<dbReference type="PROSITE" id="PS50888">
    <property type="entry name" value="BHLH"/>
    <property type="match status" value="1"/>
</dbReference>
<evidence type="ECO:0000255" key="1">
    <source>
        <dbReference type="PROSITE-ProRule" id="PRU00981"/>
    </source>
</evidence>
<evidence type="ECO:0000256" key="2">
    <source>
        <dbReference type="SAM" id="MobiDB-lite"/>
    </source>
</evidence>
<evidence type="ECO:0000269" key="3">
    <source>
    </source>
</evidence>
<evidence type="ECO:0000269" key="4">
    <source>
    </source>
</evidence>
<evidence type="ECO:0000269" key="5">
    <source>
    </source>
</evidence>
<evidence type="ECO:0000269" key="6">
    <source>
    </source>
</evidence>
<evidence type="ECO:0000305" key="7"/>
<evidence type="ECO:0000312" key="8">
    <source>
        <dbReference type="EMBL" id="AAL90428.1"/>
    </source>
</evidence>
<reference evidence="7" key="1">
    <citation type="journal article" date="1996" name="Science">
        <title>Myc and Max homologs in Drosophila.</title>
        <authorList>
            <person name="Gallant P."/>
            <person name="Shiio Y."/>
            <person name="Cheng P.F."/>
            <person name="Parkhurst S.M."/>
            <person name="Eisenman R.N."/>
        </authorList>
    </citation>
    <scope>NUCLEOTIDE SEQUENCE [MRNA]</scope>
    <scope>FUNCTION</scope>
    <scope>SUBUNIT</scope>
    <scope>TISSUE SPECIFICITY</scope>
    <scope>DEVELOPMENTAL STAGE</scope>
    <source>
        <strain evidence="6">Oregon-R</strain>
    </source>
</reference>
<reference evidence="7" key="2">
    <citation type="journal article" date="2000" name="Science">
        <title>The genome sequence of Drosophila melanogaster.</title>
        <authorList>
            <person name="Adams M.D."/>
            <person name="Celniker S.E."/>
            <person name="Holt R.A."/>
            <person name="Evans C.A."/>
            <person name="Gocayne J.D."/>
            <person name="Amanatides P.G."/>
            <person name="Scherer S.E."/>
            <person name="Li P.W."/>
            <person name="Hoskins R.A."/>
            <person name="Galle R.F."/>
            <person name="George R.A."/>
            <person name="Lewis S.E."/>
            <person name="Richards S."/>
            <person name="Ashburner M."/>
            <person name="Henderson S.N."/>
            <person name="Sutton G.G."/>
            <person name="Wortman J.R."/>
            <person name="Yandell M.D."/>
            <person name="Zhang Q."/>
            <person name="Chen L.X."/>
            <person name="Brandon R.C."/>
            <person name="Rogers Y.-H.C."/>
            <person name="Blazej R.G."/>
            <person name="Champe M."/>
            <person name="Pfeiffer B.D."/>
            <person name="Wan K.H."/>
            <person name="Doyle C."/>
            <person name="Baxter E.G."/>
            <person name="Helt G."/>
            <person name="Nelson C.R."/>
            <person name="Miklos G.L.G."/>
            <person name="Abril J.F."/>
            <person name="Agbayani A."/>
            <person name="An H.-J."/>
            <person name="Andrews-Pfannkoch C."/>
            <person name="Baldwin D."/>
            <person name="Ballew R.M."/>
            <person name="Basu A."/>
            <person name="Baxendale J."/>
            <person name="Bayraktaroglu L."/>
            <person name="Beasley E.M."/>
            <person name="Beeson K.Y."/>
            <person name="Benos P.V."/>
            <person name="Berman B.P."/>
            <person name="Bhandari D."/>
            <person name="Bolshakov S."/>
            <person name="Borkova D."/>
            <person name="Botchan M.R."/>
            <person name="Bouck J."/>
            <person name="Brokstein P."/>
            <person name="Brottier P."/>
            <person name="Burtis K.C."/>
            <person name="Busam D.A."/>
            <person name="Butler H."/>
            <person name="Cadieu E."/>
            <person name="Center A."/>
            <person name="Chandra I."/>
            <person name="Cherry J.M."/>
            <person name="Cawley S."/>
            <person name="Dahlke C."/>
            <person name="Davenport L.B."/>
            <person name="Davies P."/>
            <person name="de Pablos B."/>
            <person name="Delcher A."/>
            <person name="Deng Z."/>
            <person name="Mays A.D."/>
            <person name="Dew I."/>
            <person name="Dietz S.M."/>
            <person name="Dodson K."/>
            <person name="Doup L.E."/>
            <person name="Downes M."/>
            <person name="Dugan-Rocha S."/>
            <person name="Dunkov B.C."/>
            <person name="Dunn P."/>
            <person name="Durbin K.J."/>
            <person name="Evangelista C.C."/>
            <person name="Ferraz C."/>
            <person name="Ferriera S."/>
            <person name="Fleischmann W."/>
            <person name="Fosler C."/>
            <person name="Gabrielian A.E."/>
            <person name="Garg N.S."/>
            <person name="Gelbart W.M."/>
            <person name="Glasser K."/>
            <person name="Glodek A."/>
            <person name="Gong F."/>
            <person name="Gorrell J.H."/>
            <person name="Gu Z."/>
            <person name="Guan P."/>
            <person name="Harris M."/>
            <person name="Harris N.L."/>
            <person name="Harvey D.A."/>
            <person name="Heiman T.J."/>
            <person name="Hernandez J.R."/>
            <person name="Houck J."/>
            <person name="Hostin D."/>
            <person name="Houston K.A."/>
            <person name="Howland T.J."/>
            <person name="Wei M.-H."/>
            <person name="Ibegwam C."/>
            <person name="Jalali M."/>
            <person name="Kalush F."/>
            <person name="Karpen G.H."/>
            <person name="Ke Z."/>
            <person name="Kennison J.A."/>
            <person name="Ketchum K.A."/>
            <person name="Kimmel B.E."/>
            <person name="Kodira C.D."/>
            <person name="Kraft C.L."/>
            <person name="Kravitz S."/>
            <person name="Kulp D."/>
            <person name="Lai Z."/>
            <person name="Lasko P."/>
            <person name="Lei Y."/>
            <person name="Levitsky A.A."/>
            <person name="Li J.H."/>
            <person name="Li Z."/>
            <person name="Liang Y."/>
            <person name="Lin X."/>
            <person name="Liu X."/>
            <person name="Mattei B."/>
            <person name="McIntosh T.C."/>
            <person name="McLeod M.P."/>
            <person name="McPherson D."/>
            <person name="Merkulov G."/>
            <person name="Milshina N.V."/>
            <person name="Mobarry C."/>
            <person name="Morris J."/>
            <person name="Moshrefi A."/>
            <person name="Mount S.M."/>
            <person name="Moy M."/>
            <person name="Murphy B."/>
            <person name="Murphy L."/>
            <person name="Muzny D.M."/>
            <person name="Nelson D.L."/>
            <person name="Nelson D.R."/>
            <person name="Nelson K.A."/>
            <person name="Nixon K."/>
            <person name="Nusskern D.R."/>
            <person name="Pacleb J.M."/>
            <person name="Palazzolo M."/>
            <person name="Pittman G.S."/>
            <person name="Pan S."/>
            <person name="Pollard J."/>
            <person name="Puri V."/>
            <person name="Reese M.G."/>
            <person name="Reinert K."/>
            <person name="Remington K."/>
            <person name="Saunders R.D.C."/>
            <person name="Scheeler F."/>
            <person name="Shen H."/>
            <person name="Shue B.C."/>
            <person name="Siden-Kiamos I."/>
            <person name="Simpson M."/>
            <person name="Skupski M.P."/>
            <person name="Smith T.J."/>
            <person name="Spier E."/>
            <person name="Spradling A.C."/>
            <person name="Stapleton M."/>
            <person name="Strong R."/>
            <person name="Sun E."/>
            <person name="Svirskas R."/>
            <person name="Tector C."/>
            <person name="Turner R."/>
            <person name="Venter E."/>
            <person name="Wang A.H."/>
            <person name="Wang X."/>
            <person name="Wang Z.-Y."/>
            <person name="Wassarman D.A."/>
            <person name="Weinstock G.M."/>
            <person name="Weissenbach J."/>
            <person name="Williams S.M."/>
            <person name="Woodage T."/>
            <person name="Worley K.C."/>
            <person name="Wu D."/>
            <person name="Yang S."/>
            <person name="Yao Q.A."/>
            <person name="Ye J."/>
            <person name="Yeh R.-F."/>
            <person name="Zaveri J.S."/>
            <person name="Zhan M."/>
            <person name="Zhang G."/>
            <person name="Zhao Q."/>
            <person name="Zheng L."/>
            <person name="Zheng X.H."/>
            <person name="Zhong F.N."/>
            <person name="Zhong W."/>
            <person name="Zhou X."/>
            <person name="Zhu S.C."/>
            <person name="Zhu X."/>
            <person name="Smith H.O."/>
            <person name="Gibbs R.A."/>
            <person name="Myers E.W."/>
            <person name="Rubin G.M."/>
            <person name="Venter J.C."/>
        </authorList>
    </citation>
    <scope>NUCLEOTIDE SEQUENCE [LARGE SCALE GENOMIC DNA]</scope>
    <source>
        <strain evidence="3">Berkeley</strain>
    </source>
</reference>
<reference key="3">
    <citation type="journal article" date="2002" name="Genome Biol.">
        <title>Annotation of the Drosophila melanogaster euchromatic genome: a systematic review.</title>
        <authorList>
            <person name="Misra S."/>
            <person name="Crosby M.A."/>
            <person name="Mungall C.J."/>
            <person name="Matthews B.B."/>
            <person name="Campbell K.S."/>
            <person name="Hradecky P."/>
            <person name="Huang Y."/>
            <person name="Kaminker J.S."/>
            <person name="Millburn G.H."/>
            <person name="Prochnik S.E."/>
            <person name="Smith C.D."/>
            <person name="Tupy J.L."/>
            <person name="Whitfield E.J."/>
            <person name="Bayraktaroglu L."/>
            <person name="Berman B.P."/>
            <person name="Bettencourt B.R."/>
            <person name="Celniker S.E."/>
            <person name="de Grey A.D.N.J."/>
            <person name="Drysdale R.A."/>
            <person name="Harris N.L."/>
            <person name="Richter J."/>
            <person name="Russo S."/>
            <person name="Schroeder A.J."/>
            <person name="Shu S.Q."/>
            <person name="Stapleton M."/>
            <person name="Yamada C."/>
            <person name="Ashburner M."/>
            <person name="Gelbart W.M."/>
            <person name="Rubin G.M."/>
            <person name="Lewis S.E."/>
        </authorList>
    </citation>
    <scope>GENOME REANNOTATION</scope>
    <source>
        <strain>Berkeley</strain>
    </source>
</reference>
<reference evidence="7" key="4">
    <citation type="journal article" date="2002" name="Genome Biol.">
        <title>A Drosophila full-length cDNA resource.</title>
        <authorList>
            <person name="Stapleton M."/>
            <person name="Carlson J.W."/>
            <person name="Brokstein P."/>
            <person name="Yu C."/>
            <person name="Champe M."/>
            <person name="George R.A."/>
            <person name="Guarin H."/>
            <person name="Kronmiller B."/>
            <person name="Pacleb J.M."/>
            <person name="Park S."/>
            <person name="Wan K.H."/>
            <person name="Rubin G.M."/>
            <person name="Celniker S.E."/>
        </authorList>
    </citation>
    <scope>NUCLEOTIDE SEQUENCE [LARGE SCALE MRNA]</scope>
    <source>
        <strain evidence="4">Berkeley</strain>
        <tissue evidence="4">Head</tissue>
    </source>
</reference>
<reference key="5">
    <citation type="submission" date="2006-10" db="EMBL/GenBank/DDBJ databases">
        <authorList>
            <person name="Stapleton M."/>
            <person name="Carlson J.W."/>
            <person name="Frise E."/>
            <person name="Kapadia B."/>
            <person name="Park S."/>
            <person name="Wan K.H."/>
            <person name="Yu C."/>
            <person name="Celniker S.E."/>
        </authorList>
    </citation>
    <scope>NUCLEOTIDE SEQUENCE [LARGE SCALE MRNA]</scope>
    <source>
        <strain>Berkeley</strain>
    </source>
</reference>
<reference key="6">
    <citation type="journal article" date="2008" name="J. Proteome Res.">
        <title>Phosphoproteome analysis of Drosophila melanogaster embryos.</title>
        <authorList>
            <person name="Zhai B."/>
            <person name="Villen J."/>
            <person name="Beausoleil S.A."/>
            <person name="Mintseris J."/>
            <person name="Gygi S.P."/>
        </authorList>
    </citation>
    <scope>PHOSPHORYLATION [LARGE SCALE ANALYSIS] AT SER-131 AND SER-137</scope>
    <scope>IDENTIFICATION BY MASS SPECTROMETRY</scope>
    <source>
        <tissue>Embryo</tissue>
    </source>
</reference>
<keyword id="KW-0010">Activator</keyword>
<keyword id="KW-0238">DNA-binding</keyword>
<keyword id="KW-0539">Nucleus</keyword>
<keyword id="KW-0597">Phosphoprotein</keyword>
<keyword id="KW-1185">Reference proteome</keyword>
<keyword id="KW-0678">Repressor</keyword>
<keyword id="KW-0804">Transcription</keyword>
<keyword id="KW-0805">Transcription regulation</keyword>
<name>MAX_DROME</name>
<gene>
    <name type="primary">Max</name>
    <name type="ORF">CG9648</name>
</gene>
<accession>P91664</accession>
<accession>Q1LZ15</accession>
<accession>Q8SXE2</accession>
<accession>Q95S07</accession>